<accession>P67627</accession>
<accession>P45536</accession>
<name>YHEU_SHIFL</name>
<gene>
    <name type="primary">yheU</name>
    <name type="ordered locus">SF3373</name>
    <name type="ordered locus">S4390</name>
</gene>
<dbReference type="EMBL" id="AE005674">
    <property type="protein sequence ID" value="AAN44836.1"/>
    <property type="molecule type" value="Genomic_DNA"/>
</dbReference>
<dbReference type="EMBL" id="AE014073">
    <property type="protein sequence ID" value="AAP19342.1"/>
    <property type="molecule type" value="Genomic_DNA"/>
</dbReference>
<dbReference type="RefSeq" id="NP_709129.1">
    <property type="nucleotide sequence ID" value="NC_004337.2"/>
</dbReference>
<dbReference type="RefSeq" id="WP_000907085.1">
    <property type="nucleotide sequence ID" value="NZ_WPGW01000003.1"/>
</dbReference>
<dbReference type="SMR" id="P67627"/>
<dbReference type="STRING" id="198214.SF3373"/>
<dbReference type="PaxDb" id="198214-SF3373"/>
<dbReference type="GeneID" id="1026969"/>
<dbReference type="KEGG" id="sfl:SF3373"/>
<dbReference type="KEGG" id="sfx:S4390"/>
<dbReference type="PATRIC" id="fig|198214.7.peg.3983"/>
<dbReference type="HOGENOM" id="CLU_186759_1_0_6"/>
<dbReference type="Proteomes" id="UP000001006">
    <property type="component" value="Chromosome"/>
</dbReference>
<dbReference type="Proteomes" id="UP000002673">
    <property type="component" value="Chromosome"/>
</dbReference>
<dbReference type="Gene3D" id="1.10.10.610">
    <property type="entry name" value="YehU-like"/>
    <property type="match status" value="1"/>
</dbReference>
<dbReference type="HAMAP" id="MF_00690">
    <property type="entry name" value="UPF0270"/>
    <property type="match status" value="1"/>
</dbReference>
<dbReference type="InterPro" id="IPR010648">
    <property type="entry name" value="UPF0270"/>
</dbReference>
<dbReference type="InterPro" id="IPR036685">
    <property type="entry name" value="YehU-like_sf"/>
</dbReference>
<dbReference type="NCBIfam" id="NF003438">
    <property type="entry name" value="PRK04966.1"/>
    <property type="match status" value="1"/>
</dbReference>
<dbReference type="Pfam" id="PF06794">
    <property type="entry name" value="UPF0270"/>
    <property type="match status" value="1"/>
</dbReference>
<dbReference type="PIRSF" id="PIRSF006169">
    <property type="entry name" value="UCP006169"/>
    <property type="match status" value="1"/>
</dbReference>
<dbReference type="SUPFAM" id="SSF118001">
    <property type="entry name" value="YehU-like"/>
    <property type="match status" value="1"/>
</dbReference>
<feature type="chain" id="PRO_0000214850" description="UPF0270 protein YheU">
    <location>
        <begin position="1"/>
        <end position="72"/>
    </location>
</feature>
<comment type="similarity">
    <text evidence="1">Belongs to the UPF0270 family.</text>
</comment>
<proteinExistence type="inferred from homology"/>
<protein>
    <recommendedName>
        <fullName>UPF0270 protein YheU</fullName>
    </recommendedName>
</protein>
<organism>
    <name type="scientific">Shigella flexneri</name>
    <dbReference type="NCBI Taxonomy" id="623"/>
    <lineage>
        <taxon>Bacteria</taxon>
        <taxon>Pseudomonadati</taxon>
        <taxon>Pseudomonadota</taxon>
        <taxon>Gammaproteobacteria</taxon>
        <taxon>Enterobacterales</taxon>
        <taxon>Enterobacteriaceae</taxon>
        <taxon>Shigella</taxon>
    </lineage>
</organism>
<keyword id="KW-1185">Reference proteome</keyword>
<evidence type="ECO:0000305" key="1"/>
<reference key="1">
    <citation type="journal article" date="2002" name="Nucleic Acids Res.">
        <title>Genome sequence of Shigella flexneri 2a: insights into pathogenicity through comparison with genomes of Escherichia coli K12 and O157.</title>
        <authorList>
            <person name="Jin Q."/>
            <person name="Yuan Z."/>
            <person name="Xu J."/>
            <person name="Wang Y."/>
            <person name="Shen Y."/>
            <person name="Lu W."/>
            <person name="Wang J."/>
            <person name="Liu H."/>
            <person name="Yang J."/>
            <person name="Yang F."/>
            <person name="Zhang X."/>
            <person name="Zhang J."/>
            <person name="Yang G."/>
            <person name="Wu H."/>
            <person name="Qu D."/>
            <person name="Dong J."/>
            <person name="Sun L."/>
            <person name="Xue Y."/>
            <person name="Zhao A."/>
            <person name="Gao Y."/>
            <person name="Zhu J."/>
            <person name="Kan B."/>
            <person name="Ding K."/>
            <person name="Chen S."/>
            <person name="Cheng H."/>
            <person name="Yao Z."/>
            <person name="He B."/>
            <person name="Chen R."/>
            <person name="Ma D."/>
            <person name="Qiang B."/>
            <person name="Wen Y."/>
            <person name="Hou Y."/>
            <person name="Yu J."/>
        </authorList>
    </citation>
    <scope>NUCLEOTIDE SEQUENCE [LARGE SCALE GENOMIC DNA]</scope>
    <source>
        <strain>301 / Serotype 2a</strain>
    </source>
</reference>
<reference key="2">
    <citation type="journal article" date="2003" name="Infect. Immun.">
        <title>Complete genome sequence and comparative genomics of Shigella flexneri serotype 2a strain 2457T.</title>
        <authorList>
            <person name="Wei J."/>
            <person name="Goldberg M.B."/>
            <person name="Burland V."/>
            <person name="Venkatesan M.M."/>
            <person name="Deng W."/>
            <person name="Fournier G."/>
            <person name="Mayhew G.F."/>
            <person name="Plunkett G. III"/>
            <person name="Rose D.J."/>
            <person name="Darling A."/>
            <person name="Mau B."/>
            <person name="Perna N.T."/>
            <person name="Payne S.M."/>
            <person name="Runyen-Janecky L.J."/>
            <person name="Zhou S."/>
            <person name="Schwartz D.C."/>
            <person name="Blattner F.R."/>
        </authorList>
    </citation>
    <scope>NUCLEOTIDE SEQUENCE [LARGE SCALE GENOMIC DNA]</scope>
    <source>
        <strain>ATCC 700930 / 2457T / Serotype 2a</strain>
    </source>
</reference>
<sequence>MLIPWQDLSPETLENLIESFVLREGTDYGEHERTLEQKVADVKRQLQCGEAVLVWSELHETVNIMPRSQFRE</sequence>